<reference key="1">
    <citation type="journal article" date="2009" name="PLoS Pathog.">
        <title>Genomic evidence for the evolution of Streptococcus equi: host restriction, increased virulence, and genetic exchange with human pathogens.</title>
        <authorList>
            <person name="Holden M.T.G."/>
            <person name="Heather Z."/>
            <person name="Paillot R."/>
            <person name="Steward K.F."/>
            <person name="Webb K."/>
            <person name="Ainslie F."/>
            <person name="Jourdan T."/>
            <person name="Bason N.C."/>
            <person name="Holroyd N.E."/>
            <person name="Mungall K."/>
            <person name="Quail M.A."/>
            <person name="Sanders M."/>
            <person name="Simmonds M."/>
            <person name="Willey D."/>
            <person name="Brooks K."/>
            <person name="Aanensen D.M."/>
            <person name="Spratt B.G."/>
            <person name="Jolley K.A."/>
            <person name="Maiden M.C.J."/>
            <person name="Kehoe M."/>
            <person name="Chanter N."/>
            <person name="Bentley S.D."/>
            <person name="Robinson C."/>
            <person name="Maskell D.J."/>
            <person name="Parkhill J."/>
            <person name="Waller A.S."/>
        </authorList>
    </citation>
    <scope>NUCLEOTIDE SEQUENCE [LARGE SCALE GENOMIC DNA]</scope>
    <source>
        <strain>4047</strain>
    </source>
</reference>
<keyword id="KW-0687">Ribonucleoprotein</keyword>
<keyword id="KW-0689">Ribosomal protein</keyword>
<name>RL29_STRE4</name>
<organism>
    <name type="scientific">Streptococcus equi subsp. equi (strain 4047)</name>
    <dbReference type="NCBI Taxonomy" id="553482"/>
    <lineage>
        <taxon>Bacteria</taxon>
        <taxon>Bacillati</taxon>
        <taxon>Bacillota</taxon>
        <taxon>Bacilli</taxon>
        <taxon>Lactobacillales</taxon>
        <taxon>Streptococcaceae</taxon>
        <taxon>Streptococcus</taxon>
    </lineage>
</organism>
<proteinExistence type="inferred from homology"/>
<sequence>MKLEEIKKFVAELRGLSQEELAKKENELKKELFDLRFQAAAGQLDQTARLNEVKKQIARVKTVQSEMK</sequence>
<dbReference type="EMBL" id="FM204883">
    <property type="protein sequence ID" value="CAW91982.1"/>
    <property type="molecule type" value="Genomic_DNA"/>
</dbReference>
<dbReference type="RefSeq" id="WP_003046054.1">
    <property type="nucleotide sequence ID" value="NC_012471.1"/>
</dbReference>
<dbReference type="SMR" id="C0M918"/>
<dbReference type="GeneID" id="93825302"/>
<dbReference type="KEGG" id="seu:SEQ_0063"/>
<dbReference type="HOGENOM" id="CLU_158491_5_2_9"/>
<dbReference type="OrthoDB" id="9815192at2"/>
<dbReference type="Proteomes" id="UP000001365">
    <property type="component" value="Chromosome"/>
</dbReference>
<dbReference type="GO" id="GO:0022625">
    <property type="term" value="C:cytosolic large ribosomal subunit"/>
    <property type="evidence" value="ECO:0007669"/>
    <property type="project" value="TreeGrafter"/>
</dbReference>
<dbReference type="GO" id="GO:0003735">
    <property type="term" value="F:structural constituent of ribosome"/>
    <property type="evidence" value="ECO:0007669"/>
    <property type="project" value="InterPro"/>
</dbReference>
<dbReference type="GO" id="GO:0006412">
    <property type="term" value="P:translation"/>
    <property type="evidence" value="ECO:0007669"/>
    <property type="project" value="UniProtKB-UniRule"/>
</dbReference>
<dbReference type="CDD" id="cd00427">
    <property type="entry name" value="Ribosomal_L29_HIP"/>
    <property type="match status" value="1"/>
</dbReference>
<dbReference type="FunFam" id="1.10.287.310:FF:000001">
    <property type="entry name" value="50S ribosomal protein L29"/>
    <property type="match status" value="1"/>
</dbReference>
<dbReference type="Gene3D" id="1.10.287.310">
    <property type="match status" value="1"/>
</dbReference>
<dbReference type="HAMAP" id="MF_00374">
    <property type="entry name" value="Ribosomal_uL29"/>
    <property type="match status" value="1"/>
</dbReference>
<dbReference type="InterPro" id="IPR050063">
    <property type="entry name" value="Ribosomal_protein_uL29"/>
</dbReference>
<dbReference type="InterPro" id="IPR001854">
    <property type="entry name" value="Ribosomal_uL29"/>
</dbReference>
<dbReference type="InterPro" id="IPR018254">
    <property type="entry name" value="Ribosomal_uL29_CS"/>
</dbReference>
<dbReference type="InterPro" id="IPR036049">
    <property type="entry name" value="Ribosomal_uL29_sf"/>
</dbReference>
<dbReference type="NCBIfam" id="TIGR00012">
    <property type="entry name" value="L29"/>
    <property type="match status" value="1"/>
</dbReference>
<dbReference type="PANTHER" id="PTHR10916">
    <property type="entry name" value="60S RIBOSOMAL PROTEIN L35/50S RIBOSOMAL PROTEIN L29"/>
    <property type="match status" value="1"/>
</dbReference>
<dbReference type="PANTHER" id="PTHR10916:SF0">
    <property type="entry name" value="LARGE RIBOSOMAL SUBUNIT PROTEIN UL29C"/>
    <property type="match status" value="1"/>
</dbReference>
<dbReference type="Pfam" id="PF00831">
    <property type="entry name" value="Ribosomal_L29"/>
    <property type="match status" value="1"/>
</dbReference>
<dbReference type="SUPFAM" id="SSF46561">
    <property type="entry name" value="Ribosomal protein L29 (L29p)"/>
    <property type="match status" value="1"/>
</dbReference>
<dbReference type="PROSITE" id="PS00579">
    <property type="entry name" value="RIBOSOMAL_L29"/>
    <property type="match status" value="1"/>
</dbReference>
<protein>
    <recommendedName>
        <fullName evidence="1">Large ribosomal subunit protein uL29</fullName>
    </recommendedName>
    <alternativeName>
        <fullName evidence="2">50S ribosomal protein L29</fullName>
    </alternativeName>
</protein>
<gene>
    <name evidence="1" type="primary">rpmC</name>
    <name type="ordered locus">SEQ_0063</name>
</gene>
<feature type="chain" id="PRO_1000194033" description="Large ribosomal subunit protein uL29">
    <location>
        <begin position="1"/>
        <end position="68"/>
    </location>
</feature>
<accession>C0M918</accession>
<evidence type="ECO:0000255" key="1">
    <source>
        <dbReference type="HAMAP-Rule" id="MF_00374"/>
    </source>
</evidence>
<evidence type="ECO:0000305" key="2"/>
<comment type="similarity">
    <text evidence="1">Belongs to the universal ribosomal protein uL29 family.</text>
</comment>